<gene>
    <name type="primary">slc29a4</name>
    <name type="ORF">zgc:158679</name>
</gene>
<name>S29A4_DANRE</name>
<organism>
    <name type="scientific">Danio rerio</name>
    <name type="common">Zebrafish</name>
    <name type="synonym">Brachydanio rerio</name>
    <dbReference type="NCBI Taxonomy" id="7955"/>
    <lineage>
        <taxon>Eukaryota</taxon>
        <taxon>Metazoa</taxon>
        <taxon>Chordata</taxon>
        <taxon>Craniata</taxon>
        <taxon>Vertebrata</taxon>
        <taxon>Euteleostomi</taxon>
        <taxon>Actinopterygii</taxon>
        <taxon>Neopterygii</taxon>
        <taxon>Teleostei</taxon>
        <taxon>Ostariophysi</taxon>
        <taxon>Cypriniformes</taxon>
        <taxon>Danionidae</taxon>
        <taxon>Danioninae</taxon>
        <taxon>Danio</taxon>
    </lineage>
</organism>
<accession>A1L272</accession>
<reference key="1">
    <citation type="submission" date="2006-12" db="EMBL/GenBank/DDBJ databases">
        <authorList>
            <consortium name="NIH - Zebrafish Gene Collection (ZGC) project"/>
        </authorList>
    </citation>
    <scope>NUCLEOTIDE SEQUENCE [LARGE SCALE MRNA]</scope>
    <source>
        <tissue>Eye</tissue>
    </source>
</reference>
<keyword id="KW-0472">Membrane</keyword>
<keyword id="KW-0597">Phosphoprotein</keyword>
<keyword id="KW-1185">Reference proteome</keyword>
<keyword id="KW-0812">Transmembrane</keyword>
<keyword id="KW-1133">Transmembrane helix</keyword>
<keyword id="KW-0813">Transport</keyword>
<comment type="function">
    <text evidence="1">Functions as a polyspecific organic cation transporter, efficiently transporting many organic cations such as monoamine neurotransmitters 1-methyl-4-phenylpyridinium and biogenic amines including serotonin, dopamine, norepinephrine and epinephrine. May play a role in regulating central nervous system homeostasis of monoamine neurotransmitters. May be involved in luminal transport of organic cations in the kidney and seems to use luminal proton gradient to drive organic cation reabsorption. Does not seem to transport nucleoside and nucleoside analogs such as uridine, cytidine, thymidine, adenosine, inosine, guanosine, and azidothymidine (By similarity).</text>
</comment>
<comment type="subcellular location">
    <subcellularLocation>
        <location evidence="4">Membrane</location>
        <topology evidence="4">Multi-pass membrane protein</topology>
    </subcellularLocation>
</comment>
<comment type="similarity">
    <text evidence="4">Belongs to the SLC29A/ENT transporter (TC 2.A.57) family.</text>
</comment>
<protein>
    <recommendedName>
        <fullName>Equilibrative nucleoside transporter 4</fullName>
    </recommendedName>
    <alternativeName>
        <fullName>Solute carrier family 29 member 4</fullName>
    </alternativeName>
</protein>
<dbReference type="EMBL" id="BC129376">
    <property type="protein sequence ID" value="AAI29377.1"/>
    <property type="molecule type" value="mRNA"/>
</dbReference>
<dbReference type="RefSeq" id="NP_001074041.1">
    <property type="nucleotide sequence ID" value="NM_001080572.1"/>
</dbReference>
<dbReference type="SMR" id="A1L272"/>
<dbReference type="FunCoup" id="A1L272">
    <property type="interactions" value="176"/>
</dbReference>
<dbReference type="STRING" id="7955.ENSDARP00000117850"/>
<dbReference type="PaxDb" id="7955-ENSDARP00000117850"/>
<dbReference type="GeneID" id="559668"/>
<dbReference type="KEGG" id="dre:559668"/>
<dbReference type="AGR" id="ZFIN:ZDB-GENE-070112-1932"/>
<dbReference type="CTD" id="559668"/>
<dbReference type="ZFIN" id="ZDB-GENE-070112-1932">
    <property type="gene designation" value="slc29a4a"/>
</dbReference>
<dbReference type="eggNOG" id="KOG1479">
    <property type="taxonomic scope" value="Eukaryota"/>
</dbReference>
<dbReference type="InParanoid" id="A1L272"/>
<dbReference type="OrthoDB" id="10014563at2759"/>
<dbReference type="PhylomeDB" id="A1L272"/>
<dbReference type="Reactome" id="R-DRE-83936">
    <property type="pathway name" value="Transport of nucleosides and free purine and pyrimidine bases across the plasma membrane"/>
</dbReference>
<dbReference type="PRO" id="PR:A1L272"/>
<dbReference type="Proteomes" id="UP000000437">
    <property type="component" value="Chromosome 3"/>
</dbReference>
<dbReference type="GO" id="GO:0005886">
    <property type="term" value="C:plasma membrane"/>
    <property type="evidence" value="ECO:0000318"/>
    <property type="project" value="GO_Central"/>
</dbReference>
<dbReference type="GO" id="GO:0008504">
    <property type="term" value="F:monoamine transmembrane transporter activity"/>
    <property type="evidence" value="ECO:0000318"/>
    <property type="project" value="GO_Central"/>
</dbReference>
<dbReference type="GO" id="GO:0005337">
    <property type="term" value="F:nucleoside transmembrane transporter activity"/>
    <property type="evidence" value="ECO:0007669"/>
    <property type="project" value="InterPro"/>
</dbReference>
<dbReference type="FunFam" id="1.20.1250.20:FF:000255">
    <property type="entry name" value="Solute carrier family 29 member 4"/>
    <property type="match status" value="1"/>
</dbReference>
<dbReference type="InterPro" id="IPR002259">
    <property type="entry name" value="Eqnu_transpt"/>
</dbReference>
<dbReference type="InterPro" id="IPR036259">
    <property type="entry name" value="MFS_trans_sf"/>
</dbReference>
<dbReference type="PANTHER" id="PTHR10332">
    <property type="entry name" value="EQUILIBRATIVE NUCLEOSIDE TRANSPORTER"/>
    <property type="match status" value="1"/>
</dbReference>
<dbReference type="PANTHER" id="PTHR10332:SF10">
    <property type="entry name" value="EQUILIBRATIVE NUCLEOSIDE TRANSPORTER 4"/>
    <property type="match status" value="1"/>
</dbReference>
<dbReference type="Pfam" id="PF01733">
    <property type="entry name" value="Nucleoside_tran"/>
    <property type="match status" value="1"/>
</dbReference>
<dbReference type="PIRSF" id="PIRSF016379">
    <property type="entry name" value="ENT"/>
    <property type="match status" value="1"/>
</dbReference>
<dbReference type="PRINTS" id="PR01130">
    <property type="entry name" value="DERENTRNSPRT"/>
</dbReference>
<dbReference type="SUPFAM" id="SSF103473">
    <property type="entry name" value="MFS general substrate transporter"/>
    <property type="match status" value="1"/>
</dbReference>
<evidence type="ECO:0000250" key="1"/>
<evidence type="ECO:0000255" key="2"/>
<evidence type="ECO:0000256" key="3">
    <source>
        <dbReference type="SAM" id="MobiDB-lite"/>
    </source>
</evidence>
<evidence type="ECO:0000305" key="4"/>
<feature type="chain" id="PRO_0000326253" description="Equilibrative nucleoside transporter 4">
    <location>
        <begin position="1"/>
        <end position="518"/>
    </location>
</feature>
<feature type="topological domain" description="Extracellular" evidence="2">
    <location>
        <begin position="1"/>
        <end position="66"/>
    </location>
</feature>
<feature type="transmembrane region" description="Helical" evidence="2">
    <location>
        <begin position="67"/>
        <end position="87"/>
    </location>
</feature>
<feature type="topological domain" description="Cytoplasmic" evidence="2">
    <location>
        <begin position="88"/>
        <end position="99"/>
    </location>
</feature>
<feature type="transmembrane region" description="Helical" evidence="2">
    <location>
        <begin position="100"/>
        <end position="120"/>
    </location>
</feature>
<feature type="topological domain" description="Extracellular" evidence="2">
    <location>
        <begin position="121"/>
        <end position="133"/>
    </location>
</feature>
<feature type="transmembrane region" description="Helical" evidence="2">
    <location>
        <begin position="134"/>
        <end position="154"/>
    </location>
</feature>
<feature type="topological domain" description="Cytoplasmic" evidence="2">
    <location>
        <begin position="155"/>
        <end position="157"/>
    </location>
</feature>
<feature type="transmembrane region" description="Helical" evidence="2">
    <location>
        <begin position="158"/>
        <end position="178"/>
    </location>
</feature>
<feature type="topological domain" description="Extracellular" evidence="2">
    <location>
        <begin position="179"/>
        <end position="198"/>
    </location>
</feature>
<feature type="transmembrane region" description="Helical" evidence="2">
    <location>
        <begin position="199"/>
        <end position="218"/>
    </location>
</feature>
<feature type="topological domain" description="Cytoplasmic" evidence="2">
    <location>
        <begin position="219"/>
        <end position="229"/>
    </location>
</feature>
<feature type="transmembrane region" description="Helical" evidence="2">
    <location>
        <begin position="230"/>
        <end position="250"/>
    </location>
</feature>
<feature type="topological domain" description="Extracellular" evidence="2">
    <location>
        <begin position="251"/>
        <end position="342"/>
    </location>
</feature>
<feature type="transmembrane region" description="Helical" evidence="2">
    <location>
        <begin position="343"/>
        <end position="363"/>
    </location>
</feature>
<feature type="topological domain" description="Cytoplasmic" evidence="2">
    <location>
        <begin position="364"/>
        <end position="376"/>
    </location>
</feature>
<feature type="transmembrane region" description="Helical" evidence="2">
    <location>
        <begin position="377"/>
        <end position="397"/>
    </location>
</feature>
<feature type="topological domain" description="Extracellular" evidence="2">
    <location>
        <begin position="398"/>
        <end position="407"/>
    </location>
</feature>
<feature type="transmembrane region" description="Helical" evidence="2">
    <location>
        <begin position="408"/>
        <end position="428"/>
    </location>
</feature>
<feature type="topological domain" description="Cytoplasmic" evidence="2">
    <location>
        <begin position="429"/>
        <end position="439"/>
    </location>
</feature>
<feature type="transmembrane region" description="Helical" evidence="2">
    <location>
        <begin position="440"/>
        <end position="460"/>
    </location>
</feature>
<feature type="topological domain" description="Extracellular" evidence="2">
    <location>
        <begin position="461"/>
        <end position="476"/>
    </location>
</feature>
<feature type="transmembrane region" description="Helical" evidence="2">
    <location>
        <begin position="477"/>
        <end position="497"/>
    </location>
</feature>
<feature type="topological domain" description="Cytoplasmic" evidence="2">
    <location>
        <begin position="498"/>
        <end position="518"/>
    </location>
</feature>
<feature type="region of interest" description="Disordered" evidence="3">
    <location>
        <begin position="1"/>
        <end position="21"/>
    </location>
</feature>
<feature type="compositionally biased region" description="Basic and acidic residues" evidence="3">
    <location>
        <begin position="1"/>
        <end position="10"/>
    </location>
</feature>
<proteinExistence type="evidence at transcript level"/>
<sequence>MGSKGAERRKQATPGQTPEGNVVMSFSFESYQLEEEDCQGKDISDKGVLALSEPAFEEAVPDDRYHGIYFAMLLAGVGFLLPYNSFITDVDYLHHKFEGTSIVFDMGLTYILVALVAVILNNVLVEMLSLHTRITVGYLFALGPLLFVTIFDVWLERFTIKQAYVINLMSMGTVAFGCTVQQSSFYGYMGMLPKRYTQGVMTGESTAGVIISLSRIFTKLLIKDERKNTIIFFVISICMVLVCFILHLLVRRTRFVQYYTSLARRGLSHAKDHSQHASQYQVHHDVITEEGNGAVGCSPAGDGCADFAGGNTYVRFDVPKPKMKRSWPGVKDMILHRYVVARVIWTYMLSIAVTYFITLCLFPGLESEIKNATLGEWLPILIMAIFNISDFVGKILAAVPYEWNGTRLLFFSCVRVVFIPLFIMCVYPAQMPMFSHPAWPCIFSLFMGITNGYFGSVPMIHAAGKVAPEQRELAGNIMTVSYMSGLMLGSVVAYAAYSFTASGSSFHSQTGYNFTQGY</sequence>